<accession>C5CM23</accession>
<protein>
    <recommendedName>
        <fullName evidence="1">Small ribosomal subunit protein uS9</fullName>
    </recommendedName>
    <alternativeName>
        <fullName evidence="2">30S ribosomal protein S9</fullName>
    </alternativeName>
</protein>
<name>RS9_VARPS</name>
<gene>
    <name evidence="1" type="primary">rpsI</name>
    <name type="ordered locus">Vapar_4677</name>
</gene>
<feature type="chain" id="PRO_1000211849" description="Small ribosomal subunit protein uS9">
    <location>
        <begin position="1"/>
        <end position="130"/>
    </location>
</feature>
<comment type="similarity">
    <text evidence="1">Belongs to the universal ribosomal protein uS9 family.</text>
</comment>
<sequence>MIGEWNNGTGRRKSSVARVFLKKGTGKITVNGKDIQEFFGRETSIMIAKQPLVLTNNLEAFDVMVNVNGGGESGQAGATRHGITRALIDYDASLKPVLSQAGYVTRDAREVERKKVGLHSARRRKQFSKR</sequence>
<dbReference type="EMBL" id="CP001635">
    <property type="protein sequence ID" value="ACS21282.1"/>
    <property type="molecule type" value="Genomic_DNA"/>
</dbReference>
<dbReference type="SMR" id="C5CM23"/>
<dbReference type="STRING" id="543728.Vapar_4677"/>
<dbReference type="KEGG" id="vap:Vapar_4677"/>
<dbReference type="eggNOG" id="COG0103">
    <property type="taxonomic scope" value="Bacteria"/>
</dbReference>
<dbReference type="HOGENOM" id="CLU_046483_2_1_4"/>
<dbReference type="OrthoDB" id="9803965at2"/>
<dbReference type="GO" id="GO:0022627">
    <property type="term" value="C:cytosolic small ribosomal subunit"/>
    <property type="evidence" value="ECO:0007669"/>
    <property type="project" value="TreeGrafter"/>
</dbReference>
<dbReference type="GO" id="GO:0003723">
    <property type="term" value="F:RNA binding"/>
    <property type="evidence" value="ECO:0007669"/>
    <property type="project" value="TreeGrafter"/>
</dbReference>
<dbReference type="GO" id="GO:0003735">
    <property type="term" value="F:structural constituent of ribosome"/>
    <property type="evidence" value="ECO:0007669"/>
    <property type="project" value="InterPro"/>
</dbReference>
<dbReference type="GO" id="GO:0006412">
    <property type="term" value="P:translation"/>
    <property type="evidence" value="ECO:0007669"/>
    <property type="project" value="UniProtKB-UniRule"/>
</dbReference>
<dbReference type="FunFam" id="3.30.230.10:FF:000001">
    <property type="entry name" value="30S ribosomal protein S9"/>
    <property type="match status" value="1"/>
</dbReference>
<dbReference type="Gene3D" id="3.30.230.10">
    <property type="match status" value="1"/>
</dbReference>
<dbReference type="HAMAP" id="MF_00532_B">
    <property type="entry name" value="Ribosomal_uS9_B"/>
    <property type="match status" value="1"/>
</dbReference>
<dbReference type="InterPro" id="IPR020568">
    <property type="entry name" value="Ribosomal_Su5_D2-typ_SF"/>
</dbReference>
<dbReference type="InterPro" id="IPR000754">
    <property type="entry name" value="Ribosomal_uS9"/>
</dbReference>
<dbReference type="InterPro" id="IPR023035">
    <property type="entry name" value="Ribosomal_uS9_bac/plastid"/>
</dbReference>
<dbReference type="InterPro" id="IPR020574">
    <property type="entry name" value="Ribosomal_uS9_CS"/>
</dbReference>
<dbReference type="InterPro" id="IPR014721">
    <property type="entry name" value="Ribsml_uS5_D2-typ_fold_subgr"/>
</dbReference>
<dbReference type="NCBIfam" id="NF001099">
    <property type="entry name" value="PRK00132.1"/>
    <property type="match status" value="1"/>
</dbReference>
<dbReference type="PANTHER" id="PTHR21569">
    <property type="entry name" value="RIBOSOMAL PROTEIN S9"/>
    <property type="match status" value="1"/>
</dbReference>
<dbReference type="PANTHER" id="PTHR21569:SF1">
    <property type="entry name" value="SMALL RIBOSOMAL SUBUNIT PROTEIN US9M"/>
    <property type="match status" value="1"/>
</dbReference>
<dbReference type="Pfam" id="PF00380">
    <property type="entry name" value="Ribosomal_S9"/>
    <property type="match status" value="1"/>
</dbReference>
<dbReference type="SUPFAM" id="SSF54211">
    <property type="entry name" value="Ribosomal protein S5 domain 2-like"/>
    <property type="match status" value="1"/>
</dbReference>
<dbReference type="PROSITE" id="PS00360">
    <property type="entry name" value="RIBOSOMAL_S9"/>
    <property type="match status" value="1"/>
</dbReference>
<keyword id="KW-0687">Ribonucleoprotein</keyword>
<keyword id="KW-0689">Ribosomal protein</keyword>
<proteinExistence type="inferred from homology"/>
<reference key="1">
    <citation type="journal article" date="2011" name="J. Bacteriol.">
        <title>Complete genome sequence of the metabolically versatile plant growth-promoting endophyte, Variovorax paradoxus S110.</title>
        <authorList>
            <person name="Han J.I."/>
            <person name="Choi H.K."/>
            <person name="Lee S.W."/>
            <person name="Orwin P.M."/>
            <person name="Kim J."/>
            <person name="Laroe S.L."/>
            <person name="Kim T.G."/>
            <person name="O'Neil J."/>
            <person name="Leadbetter J.R."/>
            <person name="Lee S.Y."/>
            <person name="Hur C.G."/>
            <person name="Spain J.C."/>
            <person name="Ovchinnikova G."/>
            <person name="Goodwin L."/>
            <person name="Han C."/>
        </authorList>
    </citation>
    <scope>NUCLEOTIDE SEQUENCE [LARGE SCALE GENOMIC DNA]</scope>
    <source>
        <strain>S110</strain>
    </source>
</reference>
<organism>
    <name type="scientific">Variovorax paradoxus (strain S110)</name>
    <dbReference type="NCBI Taxonomy" id="543728"/>
    <lineage>
        <taxon>Bacteria</taxon>
        <taxon>Pseudomonadati</taxon>
        <taxon>Pseudomonadota</taxon>
        <taxon>Betaproteobacteria</taxon>
        <taxon>Burkholderiales</taxon>
        <taxon>Comamonadaceae</taxon>
        <taxon>Variovorax</taxon>
    </lineage>
</organism>
<evidence type="ECO:0000255" key="1">
    <source>
        <dbReference type="HAMAP-Rule" id="MF_00532"/>
    </source>
</evidence>
<evidence type="ECO:0000305" key="2"/>